<keyword id="KW-1003">Cell membrane</keyword>
<keyword id="KW-0325">Glycoprotein</keyword>
<keyword id="KW-0472">Membrane</keyword>
<keyword id="KW-1185">Reference proteome</keyword>
<keyword id="KW-0812">Transmembrane</keyword>
<keyword id="KW-1133">Transmembrane helix</keyword>
<protein>
    <recommendedName>
        <fullName>CASP-like protein 1E1</fullName>
        <shortName>AtCASPL1E1</shortName>
    </recommendedName>
</protein>
<evidence type="ECO:0000250" key="1"/>
<evidence type="ECO:0000255" key="2"/>
<evidence type="ECO:0000256" key="3">
    <source>
        <dbReference type="SAM" id="MobiDB-lite"/>
    </source>
</evidence>
<evidence type="ECO:0000269" key="4">
    <source>
    </source>
</evidence>
<evidence type="ECO:0000269" key="5">
    <source>
    </source>
</evidence>
<evidence type="ECO:0000305" key="6"/>
<reference key="1">
    <citation type="journal article" date="1998" name="Nature">
        <title>Analysis of 1.9 Mb of contiguous sequence from chromosome 4 of Arabidopsis thaliana.</title>
        <authorList>
            <person name="Bevan M."/>
            <person name="Bancroft I."/>
            <person name="Bent E."/>
            <person name="Love K."/>
            <person name="Goodman H.M."/>
            <person name="Dean C."/>
            <person name="Bergkamp R."/>
            <person name="Dirkse W."/>
            <person name="van Staveren M."/>
            <person name="Stiekema W."/>
            <person name="Drost L."/>
            <person name="Ridley P."/>
            <person name="Hudson S.-A."/>
            <person name="Patel K."/>
            <person name="Murphy G."/>
            <person name="Piffanelli P."/>
            <person name="Wedler H."/>
            <person name="Wedler E."/>
            <person name="Wambutt R."/>
            <person name="Weitzenegger T."/>
            <person name="Pohl T."/>
            <person name="Terryn N."/>
            <person name="Gielen J."/>
            <person name="Villarroel R."/>
            <person name="De Clercq R."/>
            <person name="van Montagu M."/>
            <person name="Lecharny A."/>
            <person name="Aubourg S."/>
            <person name="Gy I."/>
            <person name="Kreis M."/>
            <person name="Lao N."/>
            <person name="Kavanagh T."/>
            <person name="Hempel S."/>
            <person name="Kotter P."/>
            <person name="Entian K.-D."/>
            <person name="Rieger M."/>
            <person name="Schaefer M."/>
            <person name="Funk B."/>
            <person name="Mueller-Auer S."/>
            <person name="Silvey M."/>
            <person name="James R."/>
            <person name="Monfort A."/>
            <person name="Pons A."/>
            <person name="Puigdomenech P."/>
            <person name="Douka A."/>
            <person name="Voukelatou E."/>
            <person name="Milioni D."/>
            <person name="Hatzopoulos P."/>
            <person name="Piravandi E."/>
            <person name="Obermaier B."/>
            <person name="Hilbert H."/>
            <person name="Duesterhoeft A."/>
            <person name="Moores T."/>
            <person name="Jones J.D.G."/>
            <person name="Eneva T."/>
            <person name="Palme K."/>
            <person name="Benes V."/>
            <person name="Rechmann S."/>
            <person name="Ansorge W."/>
            <person name="Cooke R."/>
            <person name="Berger C."/>
            <person name="Delseny M."/>
            <person name="Voet M."/>
            <person name="Volckaert G."/>
            <person name="Mewes H.-W."/>
            <person name="Klosterman S."/>
            <person name="Schueller C."/>
            <person name="Chalwatzis N."/>
        </authorList>
    </citation>
    <scope>NUCLEOTIDE SEQUENCE [LARGE SCALE GENOMIC DNA]</scope>
    <source>
        <strain>cv. Columbia</strain>
    </source>
</reference>
<reference key="2">
    <citation type="journal article" date="1999" name="Nature">
        <title>Sequence and analysis of chromosome 4 of the plant Arabidopsis thaliana.</title>
        <authorList>
            <person name="Mayer K.F.X."/>
            <person name="Schueller C."/>
            <person name="Wambutt R."/>
            <person name="Murphy G."/>
            <person name="Volckaert G."/>
            <person name="Pohl T."/>
            <person name="Duesterhoeft A."/>
            <person name="Stiekema W."/>
            <person name="Entian K.-D."/>
            <person name="Terryn N."/>
            <person name="Harris B."/>
            <person name="Ansorge W."/>
            <person name="Brandt P."/>
            <person name="Grivell L.A."/>
            <person name="Rieger M."/>
            <person name="Weichselgartner M."/>
            <person name="de Simone V."/>
            <person name="Obermaier B."/>
            <person name="Mache R."/>
            <person name="Mueller M."/>
            <person name="Kreis M."/>
            <person name="Delseny M."/>
            <person name="Puigdomenech P."/>
            <person name="Watson M."/>
            <person name="Schmidtheini T."/>
            <person name="Reichert B."/>
            <person name="Portetelle D."/>
            <person name="Perez-Alonso M."/>
            <person name="Boutry M."/>
            <person name="Bancroft I."/>
            <person name="Vos P."/>
            <person name="Hoheisel J."/>
            <person name="Zimmermann W."/>
            <person name="Wedler H."/>
            <person name="Ridley P."/>
            <person name="Langham S.-A."/>
            <person name="McCullagh B."/>
            <person name="Bilham L."/>
            <person name="Robben J."/>
            <person name="van der Schueren J."/>
            <person name="Grymonprez B."/>
            <person name="Chuang Y.-J."/>
            <person name="Vandenbussche F."/>
            <person name="Braeken M."/>
            <person name="Weltjens I."/>
            <person name="Voet M."/>
            <person name="Bastiaens I."/>
            <person name="Aert R."/>
            <person name="Defoor E."/>
            <person name="Weitzenegger T."/>
            <person name="Bothe G."/>
            <person name="Ramsperger U."/>
            <person name="Hilbert H."/>
            <person name="Braun M."/>
            <person name="Holzer E."/>
            <person name="Brandt A."/>
            <person name="Peters S."/>
            <person name="van Staveren M."/>
            <person name="Dirkse W."/>
            <person name="Mooijman P."/>
            <person name="Klein Lankhorst R."/>
            <person name="Rose M."/>
            <person name="Hauf J."/>
            <person name="Koetter P."/>
            <person name="Berneiser S."/>
            <person name="Hempel S."/>
            <person name="Feldpausch M."/>
            <person name="Lamberth S."/>
            <person name="Van den Daele H."/>
            <person name="De Keyser A."/>
            <person name="Buysshaert C."/>
            <person name="Gielen J."/>
            <person name="Villarroel R."/>
            <person name="De Clercq R."/>
            <person name="van Montagu M."/>
            <person name="Rogers J."/>
            <person name="Cronin A."/>
            <person name="Quail M.A."/>
            <person name="Bray-Allen S."/>
            <person name="Clark L."/>
            <person name="Doggett J."/>
            <person name="Hall S."/>
            <person name="Kay M."/>
            <person name="Lennard N."/>
            <person name="McLay K."/>
            <person name="Mayes R."/>
            <person name="Pettett A."/>
            <person name="Rajandream M.A."/>
            <person name="Lyne M."/>
            <person name="Benes V."/>
            <person name="Rechmann S."/>
            <person name="Borkova D."/>
            <person name="Bloecker H."/>
            <person name="Scharfe M."/>
            <person name="Grimm M."/>
            <person name="Loehnert T.-H."/>
            <person name="Dose S."/>
            <person name="de Haan M."/>
            <person name="Maarse A.C."/>
            <person name="Schaefer M."/>
            <person name="Mueller-Auer S."/>
            <person name="Gabel C."/>
            <person name="Fuchs M."/>
            <person name="Fartmann B."/>
            <person name="Granderath K."/>
            <person name="Dauner D."/>
            <person name="Herzl A."/>
            <person name="Neumann S."/>
            <person name="Argiriou A."/>
            <person name="Vitale D."/>
            <person name="Liguori R."/>
            <person name="Piravandi E."/>
            <person name="Massenet O."/>
            <person name="Quigley F."/>
            <person name="Clabauld G."/>
            <person name="Muendlein A."/>
            <person name="Felber R."/>
            <person name="Schnabl S."/>
            <person name="Hiller R."/>
            <person name="Schmidt W."/>
            <person name="Lecharny A."/>
            <person name="Aubourg S."/>
            <person name="Chefdor F."/>
            <person name="Cooke R."/>
            <person name="Berger C."/>
            <person name="Monfort A."/>
            <person name="Casacuberta E."/>
            <person name="Gibbons T."/>
            <person name="Weber N."/>
            <person name="Vandenbol M."/>
            <person name="Bargues M."/>
            <person name="Terol J."/>
            <person name="Torres A."/>
            <person name="Perez-Perez A."/>
            <person name="Purnelle B."/>
            <person name="Bent E."/>
            <person name="Johnson S."/>
            <person name="Tacon D."/>
            <person name="Jesse T."/>
            <person name="Heijnen L."/>
            <person name="Schwarz S."/>
            <person name="Scholler P."/>
            <person name="Heber S."/>
            <person name="Francs P."/>
            <person name="Bielke C."/>
            <person name="Frishman D."/>
            <person name="Haase D."/>
            <person name="Lemcke K."/>
            <person name="Mewes H.-W."/>
            <person name="Stocker S."/>
            <person name="Zaccaria P."/>
            <person name="Bevan M."/>
            <person name="Wilson R.K."/>
            <person name="de la Bastide M."/>
            <person name="Habermann K."/>
            <person name="Parnell L."/>
            <person name="Dedhia N."/>
            <person name="Gnoj L."/>
            <person name="Schutz K."/>
            <person name="Huang E."/>
            <person name="Spiegel L."/>
            <person name="Sekhon M."/>
            <person name="Murray J."/>
            <person name="Sheet P."/>
            <person name="Cordes M."/>
            <person name="Abu-Threideh J."/>
            <person name="Stoneking T."/>
            <person name="Kalicki J."/>
            <person name="Graves T."/>
            <person name="Harmon G."/>
            <person name="Edwards J."/>
            <person name="Latreille P."/>
            <person name="Courtney L."/>
            <person name="Cloud J."/>
            <person name="Abbott A."/>
            <person name="Scott K."/>
            <person name="Johnson D."/>
            <person name="Minx P."/>
            <person name="Bentley D."/>
            <person name="Fulton B."/>
            <person name="Miller N."/>
            <person name="Greco T."/>
            <person name="Kemp K."/>
            <person name="Kramer J."/>
            <person name="Fulton L."/>
            <person name="Mardis E."/>
            <person name="Dante M."/>
            <person name="Pepin K."/>
            <person name="Hillier L.W."/>
            <person name="Nelson J."/>
            <person name="Spieth J."/>
            <person name="Ryan E."/>
            <person name="Andrews S."/>
            <person name="Geisel C."/>
            <person name="Layman D."/>
            <person name="Du H."/>
            <person name="Ali J."/>
            <person name="Berghoff A."/>
            <person name="Jones K."/>
            <person name="Drone K."/>
            <person name="Cotton M."/>
            <person name="Joshu C."/>
            <person name="Antonoiu B."/>
            <person name="Zidanic M."/>
            <person name="Strong C."/>
            <person name="Sun H."/>
            <person name="Lamar B."/>
            <person name="Yordan C."/>
            <person name="Ma P."/>
            <person name="Zhong J."/>
            <person name="Preston R."/>
            <person name="Vil D."/>
            <person name="Shekher M."/>
            <person name="Matero A."/>
            <person name="Shah R."/>
            <person name="Swaby I.K."/>
            <person name="O'Shaughnessy A."/>
            <person name="Rodriguez M."/>
            <person name="Hoffman J."/>
            <person name="Till S."/>
            <person name="Granat S."/>
            <person name="Shohdy N."/>
            <person name="Hasegawa A."/>
            <person name="Hameed A."/>
            <person name="Lodhi M."/>
            <person name="Johnson A."/>
            <person name="Chen E."/>
            <person name="Marra M.A."/>
            <person name="Martienssen R."/>
            <person name="McCombie W.R."/>
        </authorList>
    </citation>
    <scope>NUCLEOTIDE SEQUENCE [LARGE SCALE GENOMIC DNA]</scope>
    <source>
        <strain>cv. Columbia</strain>
    </source>
</reference>
<reference key="3">
    <citation type="journal article" date="2017" name="Plant J.">
        <title>Araport11: a complete reannotation of the Arabidopsis thaliana reference genome.</title>
        <authorList>
            <person name="Cheng C.Y."/>
            <person name="Krishnakumar V."/>
            <person name="Chan A.P."/>
            <person name="Thibaud-Nissen F."/>
            <person name="Schobel S."/>
            <person name="Town C.D."/>
        </authorList>
    </citation>
    <scope>GENOME REANNOTATION</scope>
    <source>
        <strain>cv. Columbia</strain>
    </source>
</reference>
<reference key="4">
    <citation type="submission" date="2006-07" db="EMBL/GenBank/DDBJ databases">
        <title>Large-scale analysis of RIKEN Arabidopsis full-length (RAFL) cDNAs.</title>
        <authorList>
            <person name="Totoki Y."/>
            <person name="Seki M."/>
            <person name="Ishida J."/>
            <person name="Nakajima M."/>
            <person name="Enju A."/>
            <person name="Kamiya A."/>
            <person name="Narusaka M."/>
            <person name="Shin-i T."/>
            <person name="Nakagawa M."/>
            <person name="Sakamoto N."/>
            <person name="Oishi K."/>
            <person name="Kohara Y."/>
            <person name="Kobayashi M."/>
            <person name="Toyoda A."/>
            <person name="Sakaki Y."/>
            <person name="Sakurai T."/>
            <person name="Iida K."/>
            <person name="Akiyama K."/>
            <person name="Satou M."/>
            <person name="Toyoda T."/>
            <person name="Konagaya A."/>
            <person name="Carninci P."/>
            <person name="Kawai J."/>
            <person name="Hayashizaki Y."/>
            <person name="Shinozaki K."/>
        </authorList>
    </citation>
    <scope>NUCLEOTIDE SEQUENCE [LARGE SCALE MRNA]</scope>
    <source>
        <strain>cv. Columbia</strain>
    </source>
</reference>
<reference key="5">
    <citation type="submission" date="2006-09" db="EMBL/GenBank/DDBJ databases">
        <title>Arabidopsis ORF clones.</title>
        <authorList>
            <person name="Bautista V.R."/>
            <person name="Kim C.J."/>
            <person name="Chen H."/>
            <person name="Quinitio C."/>
            <person name="Ecker J.R."/>
        </authorList>
    </citation>
    <scope>NUCLEOTIDE SEQUENCE [LARGE SCALE MRNA]</scope>
    <source>
        <strain>cv. Columbia</strain>
    </source>
</reference>
<reference key="6">
    <citation type="submission" date="2002-03" db="EMBL/GenBank/DDBJ databases">
        <title>Full-length cDNA from Arabidopsis thaliana.</title>
        <authorList>
            <person name="Brover V.V."/>
            <person name="Troukhan M.E."/>
            <person name="Alexandrov N.A."/>
            <person name="Lu Y.-P."/>
            <person name="Flavell R.B."/>
            <person name="Feldmann K.A."/>
        </authorList>
    </citation>
    <scope>NUCLEOTIDE SEQUENCE [LARGE SCALE MRNA]</scope>
</reference>
<reference key="7">
    <citation type="journal article" date="2004" name="Mol. Cell. Proteomics">
        <title>Identification of new intrinsic proteins in Arabidopsis plasma membrane proteome.</title>
        <authorList>
            <person name="Marmagne A."/>
            <person name="Rouet M.-A."/>
            <person name="Ferro M."/>
            <person name="Rolland N."/>
            <person name="Alcon C."/>
            <person name="Joyard J."/>
            <person name="Garin J."/>
            <person name="Barbier-Brygoo H."/>
            <person name="Ephritikhine G."/>
        </authorList>
    </citation>
    <scope>IDENTIFICATION BY MASS SPECTROMETRY</scope>
    <scope>SUBCELLULAR LOCATION [LARGE SCALE ANALYSIS]</scope>
</reference>
<reference key="8">
    <citation type="journal article" date="2008" name="J. Proteome Res.">
        <title>Toward an interaction map of the two-component signaling pathway of Arabidopsis thaliana.</title>
        <authorList>
            <person name="Dortay H."/>
            <person name="Gruhn N."/>
            <person name="Pfeifer A."/>
            <person name="Schwerdtner M."/>
            <person name="Schmuelling T."/>
            <person name="Heyl A."/>
        </authorList>
    </citation>
    <scope>INTERACTION WITH AHK4</scope>
</reference>
<reference key="9">
    <citation type="journal article" date="2014" name="Plant Physiol.">
        <title>Functional and evolutionary analysis of the CASPARIAN STRIP MEMBRANE DOMAIN PROTEIN family.</title>
        <authorList>
            <person name="Roppolo D."/>
            <person name="Boeckmann B."/>
            <person name="Pfister A."/>
            <person name="Boutet E."/>
            <person name="Rubio M.C."/>
            <person name="Denervaud-Tendon V."/>
            <person name="Vermeer J.E."/>
            <person name="Gheyselinck J."/>
            <person name="Xenarios I."/>
            <person name="Geldner N."/>
        </authorList>
    </citation>
    <scope>SUBCELLULAR LOCATION</scope>
    <scope>GENE FAMILY</scope>
    <scope>NOMENCLATURE</scope>
</reference>
<dbReference type="EMBL" id="Z97339">
    <property type="protein sequence ID" value="CAB10341.1"/>
    <property type="molecule type" value="Genomic_DNA"/>
</dbReference>
<dbReference type="EMBL" id="AL161542">
    <property type="protein sequence ID" value="CAB78605.1"/>
    <property type="molecule type" value="Genomic_DNA"/>
</dbReference>
<dbReference type="EMBL" id="CP002687">
    <property type="protein sequence ID" value="AEE83630.1"/>
    <property type="molecule type" value="Genomic_DNA"/>
</dbReference>
<dbReference type="EMBL" id="AK220708">
    <property type="protein sequence ID" value="BAD93816.1"/>
    <property type="molecule type" value="mRNA"/>
</dbReference>
<dbReference type="EMBL" id="AK229320">
    <property type="protein sequence ID" value="BAF01183.1"/>
    <property type="molecule type" value="mRNA"/>
</dbReference>
<dbReference type="EMBL" id="BT028921">
    <property type="protein sequence ID" value="ABI49468.1"/>
    <property type="molecule type" value="mRNA"/>
</dbReference>
<dbReference type="EMBL" id="AY088726">
    <property type="protein sequence ID" value="AAM67044.1"/>
    <property type="molecule type" value="mRNA"/>
</dbReference>
<dbReference type="PIR" id="C71421">
    <property type="entry name" value="C71421"/>
</dbReference>
<dbReference type="RefSeq" id="NP_567473.1">
    <property type="nucleotide sequence ID" value="NM_117654.3"/>
</dbReference>
<dbReference type="SMR" id="Q8L8Z1"/>
<dbReference type="BioGRID" id="12534">
    <property type="interactions" value="1"/>
</dbReference>
<dbReference type="FunCoup" id="Q8L8Z1">
    <property type="interactions" value="269"/>
</dbReference>
<dbReference type="IntAct" id="Q8L8Z1">
    <property type="interactions" value="1"/>
</dbReference>
<dbReference type="STRING" id="3702.Q8L8Z1"/>
<dbReference type="GlyGen" id="Q8L8Z1">
    <property type="glycosylation" value="1 site"/>
</dbReference>
<dbReference type="PaxDb" id="3702-AT4G15630.1"/>
<dbReference type="ProteomicsDB" id="224439"/>
<dbReference type="EnsemblPlants" id="AT4G15630.1">
    <property type="protein sequence ID" value="AT4G15630.1"/>
    <property type="gene ID" value="AT4G15630"/>
</dbReference>
<dbReference type="GeneID" id="827240"/>
<dbReference type="Gramene" id="AT4G15630.1">
    <property type="protein sequence ID" value="AT4G15630.1"/>
    <property type="gene ID" value="AT4G15630"/>
</dbReference>
<dbReference type="KEGG" id="ath:AT4G15630"/>
<dbReference type="Araport" id="AT4G15630"/>
<dbReference type="TAIR" id="AT4G15630">
    <property type="gene designation" value="CASPL1E1"/>
</dbReference>
<dbReference type="eggNOG" id="ENOG502RZNK">
    <property type="taxonomic scope" value="Eukaryota"/>
</dbReference>
<dbReference type="HOGENOM" id="CLU_066104_1_0_1"/>
<dbReference type="InParanoid" id="Q8L8Z1"/>
<dbReference type="OMA" id="FCHQVAA"/>
<dbReference type="PhylomeDB" id="Q8L8Z1"/>
<dbReference type="PRO" id="PR:Q8L8Z1"/>
<dbReference type="Proteomes" id="UP000006548">
    <property type="component" value="Chromosome 4"/>
</dbReference>
<dbReference type="ExpressionAtlas" id="Q8L8Z1">
    <property type="expression patterns" value="baseline and differential"/>
</dbReference>
<dbReference type="GO" id="GO:0005886">
    <property type="term" value="C:plasma membrane"/>
    <property type="evidence" value="ECO:0000314"/>
    <property type="project" value="UniProtKB"/>
</dbReference>
<dbReference type="GO" id="GO:0009506">
    <property type="term" value="C:plasmodesma"/>
    <property type="evidence" value="ECO:0007005"/>
    <property type="project" value="TAIR"/>
</dbReference>
<dbReference type="GO" id="GO:0043424">
    <property type="term" value="F:protein histidine kinase binding"/>
    <property type="evidence" value="ECO:0000353"/>
    <property type="project" value="UniProtKB"/>
</dbReference>
<dbReference type="InterPro" id="IPR006459">
    <property type="entry name" value="CASP/CASPL"/>
</dbReference>
<dbReference type="InterPro" id="IPR006702">
    <property type="entry name" value="CASP_dom"/>
</dbReference>
<dbReference type="InterPro" id="IPR044173">
    <property type="entry name" value="CASPL"/>
</dbReference>
<dbReference type="NCBIfam" id="TIGR01569">
    <property type="entry name" value="A_tha_TIGR01569"/>
    <property type="match status" value="1"/>
</dbReference>
<dbReference type="PANTHER" id="PTHR36488">
    <property type="entry name" value="CASP-LIKE PROTEIN 1U1"/>
    <property type="match status" value="1"/>
</dbReference>
<dbReference type="PANTHER" id="PTHR36488:SF8">
    <property type="entry name" value="CASP-LIKE PROTEIN 1U1"/>
    <property type="match status" value="1"/>
</dbReference>
<dbReference type="Pfam" id="PF04535">
    <property type="entry name" value="CASP_dom"/>
    <property type="match status" value="1"/>
</dbReference>
<name>CSPLO_ARATH</name>
<accession>Q8L8Z1</accession>
<accession>O23414</accession>
<accession>Q570K0</accession>
<organism>
    <name type="scientific">Arabidopsis thaliana</name>
    <name type="common">Mouse-ear cress</name>
    <dbReference type="NCBI Taxonomy" id="3702"/>
    <lineage>
        <taxon>Eukaryota</taxon>
        <taxon>Viridiplantae</taxon>
        <taxon>Streptophyta</taxon>
        <taxon>Embryophyta</taxon>
        <taxon>Tracheophyta</taxon>
        <taxon>Spermatophyta</taxon>
        <taxon>Magnoliopsida</taxon>
        <taxon>eudicotyledons</taxon>
        <taxon>Gunneridae</taxon>
        <taxon>Pentapetalae</taxon>
        <taxon>rosids</taxon>
        <taxon>malvids</taxon>
        <taxon>Brassicales</taxon>
        <taxon>Brassicaceae</taxon>
        <taxon>Camelineae</taxon>
        <taxon>Arabidopsis</taxon>
    </lineage>
</organism>
<comment type="subunit">
    <text evidence="1">Homodimer and heterodimers.</text>
</comment>
<comment type="interaction">
    <interactant intactId="EBI-1807704">
        <id>Q8L8Z1</id>
    </interactant>
    <interactant intactId="EBI-1100775">
        <id>Q9C5U0</id>
        <label>AHK4</label>
    </interactant>
    <organismsDiffer>false</organismsDiffer>
    <experiments>2</experiments>
</comment>
<comment type="subcellular location">
    <subcellularLocation>
        <location evidence="4 5">Cell membrane</location>
        <topology evidence="5">Multi-pass membrane protein</topology>
    </subcellularLocation>
</comment>
<comment type="similarity">
    <text evidence="6">Belongs to the Casparian strip membrane proteins (CASP) family.</text>
</comment>
<feature type="chain" id="PRO_0000308677" description="CASP-like protein 1E1">
    <location>
        <begin position="1"/>
        <end position="190"/>
    </location>
</feature>
<feature type="topological domain" description="Cytoplasmic" evidence="2">
    <location>
        <begin position="1"/>
        <end position="28"/>
    </location>
</feature>
<feature type="transmembrane region" description="Helical" evidence="2">
    <location>
        <begin position="29"/>
        <end position="49"/>
    </location>
</feature>
<feature type="topological domain" description="Extracellular" evidence="2">
    <location>
        <begin position="50"/>
        <end position="83"/>
    </location>
</feature>
<feature type="transmembrane region" description="Helical" evidence="2">
    <location>
        <begin position="84"/>
        <end position="104"/>
    </location>
</feature>
<feature type="topological domain" description="Cytoplasmic" evidence="2">
    <location>
        <begin position="105"/>
        <end position="111"/>
    </location>
</feature>
<feature type="transmembrane region" description="Helical" evidence="2">
    <location>
        <begin position="112"/>
        <end position="132"/>
    </location>
</feature>
<feature type="topological domain" description="Extracellular" evidence="2">
    <location>
        <begin position="133"/>
        <end position="163"/>
    </location>
</feature>
<feature type="transmembrane region" description="Helical" evidence="2">
    <location>
        <begin position="164"/>
        <end position="184"/>
    </location>
</feature>
<feature type="topological domain" description="Cytoplasmic" evidence="2">
    <location>
        <begin position="185"/>
        <end position="190"/>
    </location>
</feature>
<feature type="region of interest" description="Disordered" evidence="3">
    <location>
        <begin position="1"/>
        <end position="23"/>
    </location>
</feature>
<feature type="glycosylation site" description="N-linked (GlcNAc...) asparagine" evidence="2">
    <location>
        <position position="67"/>
    </location>
</feature>
<feature type="sequence conflict" description="In Ref. 5; AAM67044." evidence="6" ref="5">
    <original>D</original>
    <variation>N</variation>
    <location>
        <position position="10"/>
    </location>
</feature>
<feature type="sequence conflict" description="In Ref. 5; AAM67044." evidence="6" ref="5">
    <original>A</original>
    <variation>T</variation>
    <location>
        <position position="115"/>
    </location>
</feature>
<feature type="sequence conflict" description="In Ref. 5; AAM67044." evidence="6" ref="5">
    <original>V</original>
    <variation>M</variation>
    <location>
        <position position="124"/>
    </location>
</feature>
<sequence length="190" mass="20109">MEHESKNKVDGMEMEKGKKESGSRKGLELTMRVLALVLTMVAATVLGVAKQTKVVPIKLIPTLPPLNVSTTAKASYLSAFVYNISANAIACGYTAISIVIVMISKGKRSKSLLMAVLIGDLMMVALLFSSTGAAGAIGLMGRHGNKHVMWKKVCGVFGKFCNQAAVSVAITLIASVVFMLLVVLDALKLP</sequence>
<gene>
    <name type="ordered locus">At4g15630</name>
    <name type="ORF">Dl3855w</name>
    <name type="ORF">FCAALL.230</name>
</gene>
<proteinExistence type="evidence at protein level"/>